<accession>Q9URQ3</accession>
<accession>D6VYW0</accession>
<accession>O13552</accession>
<organism>
    <name type="scientific">Saccharomyces cerevisiae (strain ATCC 204508 / S288c)</name>
    <name type="common">Baker's yeast</name>
    <dbReference type="NCBI Taxonomy" id="559292"/>
    <lineage>
        <taxon>Eukaryota</taxon>
        <taxon>Fungi</taxon>
        <taxon>Dikarya</taxon>
        <taxon>Ascomycota</taxon>
        <taxon>Saccharomycotina</taxon>
        <taxon>Saccharomycetes</taxon>
        <taxon>Saccharomycetales</taxon>
        <taxon>Saccharomycetaceae</taxon>
        <taxon>Saccharomyces</taxon>
    </lineage>
</organism>
<proteinExistence type="evidence at protein level"/>
<evidence type="ECO:0000255" key="1">
    <source>
        <dbReference type="PROSITE-ProRule" id="PRU01083"/>
    </source>
</evidence>
<evidence type="ECO:0000269" key="2">
    <source>
    </source>
</evidence>
<evidence type="ECO:0000269" key="3">
    <source>
    </source>
</evidence>
<evidence type="ECO:0000269" key="4">
    <source>
    </source>
</evidence>
<evidence type="ECO:0000269" key="5">
    <source>
    </source>
</evidence>
<evidence type="ECO:0000269" key="6">
    <source>
    </source>
</evidence>
<evidence type="ECO:0000269" key="7">
    <source>
    </source>
</evidence>
<evidence type="ECO:0000305" key="8"/>
<evidence type="ECO:0007744" key="9">
    <source>
        <dbReference type="PDB" id="7BV5"/>
    </source>
</evidence>
<evidence type="ECO:0007829" key="10">
    <source>
        <dbReference type="PDB" id="7BV5"/>
    </source>
</evidence>
<dbReference type="EMBL" id="AJ242668">
    <property type="protein sequence ID" value="CAB60630.1"/>
    <property type="molecule type" value="Genomic_DNA"/>
</dbReference>
<dbReference type="EMBL" id="U20618">
    <property type="protein sequence ID" value="AAB64529.1"/>
    <property type="status" value="ALT_INIT"/>
    <property type="molecule type" value="Genomic_DNA"/>
</dbReference>
<dbReference type="EMBL" id="BK006945">
    <property type="protein sequence ID" value="DAA09626.1"/>
    <property type="molecule type" value="Genomic_DNA"/>
</dbReference>
<dbReference type="RefSeq" id="NP_013420.2">
    <property type="nucleotide sequence ID" value="NM_001182205.1"/>
</dbReference>
<dbReference type="PDB" id="7BV5">
    <property type="method" value="X-ray"/>
    <property type="resolution" value="2.80 A"/>
    <property type="chains" value="C/D=1-322"/>
</dbReference>
<dbReference type="PDBsum" id="7BV5"/>
<dbReference type="SMR" id="Q9URQ3"/>
<dbReference type="BioGRID" id="31581">
    <property type="interactions" value="574"/>
</dbReference>
<dbReference type="ComplexPortal" id="CPX-1742">
    <property type="entry name" value="tRNA-specific adenosine-34 deaminase complex"/>
</dbReference>
<dbReference type="DIP" id="DIP-5917N"/>
<dbReference type="FunCoup" id="Q9URQ3">
    <property type="interactions" value="52"/>
</dbReference>
<dbReference type="IntAct" id="Q9URQ3">
    <property type="interactions" value="1"/>
</dbReference>
<dbReference type="STRING" id="4932.YLR316C"/>
<dbReference type="PaxDb" id="4932-YLR316C"/>
<dbReference type="PeptideAtlas" id="Q9URQ3"/>
<dbReference type="EnsemblFungi" id="YLR316C_mRNA">
    <property type="protein sequence ID" value="YLR316C"/>
    <property type="gene ID" value="YLR316C"/>
</dbReference>
<dbReference type="GeneID" id="851027"/>
<dbReference type="KEGG" id="sce:YLR316C"/>
<dbReference type="AGR" id="SGD:S000004308"/>
<dbReference type="SGD" id="S000004308">
    <property type="gene designation" value="TAD3"/>
</dbReference>
<dbReference type="VEuPathDB" id="FungiDB:YLR316C"/>
<dbReference type="eggNOG" id="KOG2771">
    <property type="taxonomic scope" value="Eukaryota"/>
</dbReference>
<dbReference type="GeneTree" id="ENSGT00390000010706"/>
<dbReference type="HOGENOM" id="CLU_013817_2_0_1"/>
<dbReference type="InParanoid" id="Q9URQ3"/>
<dbReference type="OMA" id="GLESHYQ"/>
<dbReference type="OrthoDB" id="3180714at2759"/>
<dbReference type="BioCyc" id="YEAST:YLR316C-MONOMER"/>
<dbReference type="BRENDA" id="3.5.4.33">
    <property type="organism ID" value="984"/>
</dbReference>
<dbReference type="BioGRID-ORCS" id="851027">
    <property type="hits" value="1 hit in 10 CRISPR screens"/>
</dbReference>
<dbReference type="PRO" id="PR:Q9URQ3"/>
<dbReference type="Proteomes" id="UP000002311">
    <property type="component" value="Chromosome XII"/>
</dbReference>
<dbReference type="RNAct" id="Q9URQ3">
    <property type="molecule type" value="protein"/>
</dbReference>
<dbReference type="GO" id="GO:0005737">
    <property type="term" value="C:cytoplasm"/>
    <property type="evidence" value="ECO:0007005"/>
    <property type="project" value="SGD"/>
</dbReference>
<dbReference type="GO" id="GO:0005634">
    <property type="term" value="C:nucleus"/>
    <property type="evidence" value="ECO:0007005"/>
    <property type="project" value="SGD"/>
</dbReference>
<dbReference type="GO" id="GO:0005777">
    <property type="term" value="C:peroxisome"/>
    <property type="evidence" value="ECO:0000314"/>
    <property type="project" value="SGD"/>
</dbReference>
<dbReference type="GO" id="GO:0052718">
    <property type="term" value="C:tRNA-specific adenosine-34 deaminase complex"/>
    <property type="evidence" value="ECO:0000353"/>
    <property type="project" value="ComplexPortal"/>
</dbReference>
<dbReference type="GO" id="GO:0008251">
    <property type="term" value="F:tRNA-specific adenosine deaminase activity"/>
    <property type="evidence" value="ECO:0000314"/>
    <property type="project" value="SGD"/>
</dbReference>
<dbReference type="GO" id="GO:0006400">
    <property type="term" value="P:tRNA modification"/>
    <property type="evidence" value="ECO:0000314"/>
    <property type="project" value="SGD"/>
</dbReference>
<dbReference type="GO" id="GO:0002100">
    <property type="term" value="P:tRNA wobble adenosine to inosine editing"/>
    <property type="evidence" value="ECO:0000314"/>
    <property type="project" value="ComplexPortal"/>
</dbReference>
<dbReference type="CDD" id="cd01285">
    <property type="entry name" value="nucleoside_deaminase"/>
    <property type="match status" value="1"/>
</dbReference>
<dbReference type="FunFam" id="3.40.140.10:FF:000091">
    <property type="entry name" value="tRNA-specific adenosine deaminase subunit"/>
    <property type="match status" value="1"/>
</dbReference>
<dbReference type="Gene3D" id="3.40.140.10">
    <property type="entry name" value="Cytidine Deaminase, domain 2"/>
    <property type="match status" value="1"/>
</dbReference>
<dbReference type="InterPro" id="IPR002125">
    <property type="entry name" value="CMP_dCMP_dom"/>
</dbReference>
<dbReference type="InterPro" id="IPR016193">
    <property type="entry name" value="Cytidine_deaminase-like"/>
</dbReference>
<dbReference type="PANTHER" id="PTHR11079">
    <property type="entry name" value="CYTOSINE DEAMINASE FAMILY MEMBER"/>
    <property type="match status" value="1"/>
</dbReference>
<dbReference type="PANTHER" id="PTHR11079:SF156">
    <property type="entry name" value="INACTIVE TRNA-SPECIFIC ADENOSINE DEAMINASE-LIKE PROTEIN 3-RELATED"/>
    <property type="match status" value="1"/>
</dbReference>
<dbReference type="Pfam" id="PF00383">
    <property type="entry name" value="dCMP_cyt_deam_1"/>
    <property type="match status" value="1"/>
</dbReference>
<dbReference type="SUPFAM" id="SSF53927">
    <property type="entry name" value="Cytidine deaminase-like"/>
    <property type="match status" value="1"/>
</dbReference>
<dbReference type="PROSITE" id="PS51747">
    <property type="entry name" value="CYT_DCMP_DEAMINASES_2"/>
    <property type="match status" value="1"/>
</dbReference>
<protein>
    <recommendedName>
        <fullName>tRNA-specific adenosine deaminase subunit TAD3</fullName>
    </recommendedName>
    <alternativeName>
        <fullName>tRNA-specific adenosine-34 deaminase subunit TAD3</fullName>
    </alternativeName>
</protein>
<keyword id="KW-0002">3D-structure</keyword>
<keyword id="KW-0963">Cytoplasm</keyword>
<keyword id="KW-0539">Nucleus</keyword>
<keyword id="KW-0576">Peroxisome</keyword>
<keyword id="KW-1185">Reference proteome</keyword>
<keyword id="KW-0819">tRNA processing</keyword>
<sequence>MVKKVNNPLKIDYQNGIIENRLLQIRNFKDVNTPKLINVWSIRIDPRDSKKVIELIRNDFQKNDPVSLRHLKRIRKDIETSTLEVVLCSKEYICDEGEINNKLKSIWVGTKKYELSDDIEVPEFAPSTKELNNAWSVKYWPLIWNGNPNDQILNDYKIDMQEVRNELSRASTLSVKMATAGKQFPMVSVFVDPSRKKDKVVAEDGRNCENSLPIDHSVMVGIRAVGERLREGVDEDANSYLCLDYDVYLTHEPCSMCSMALIHSRVRRVVFLTEMQRTGSLKLTSGDGYCMNDNKQLNSTYEAFQWIGEEYPVGQVDRDVCC</sequence>
<name>TAD3_YEAST</name>
<gene>
    <name type="primary">TAD3</name>
    <name type="ordered locus">YLR316C</name>
</gene>
<comment type="function">
    <text evidence="2 7">Structural subunit of tRNA-specific adenosine deaminase, which deaminates adenosine-34 (the first, also called wobble position of the anticodon) to inosine in many tRNAs. Inosine-34 allows the decoding of 3 different nucleotides at the third position of mRNA codons, as inosine is able to pair with U, C, and A.</text>
</comment>
<comment type="subunit">
    <text evidence="2 5">Heterodimer with TAD2.</text>
</comment>
<comment type="interaction">
    <interactant intactId="EBI-2094330">
        <id>Q9URQ3</id>
    </interactant>
    <interactant intactId="EBI-18939">
        <id>P47058</id>
        <label>TAD2</label>
    </interactant>
    <organismsDiffer>false</organismsDiffer>
    <experiments>3</experiments>
</comment>
<comment type="subcellular location">
    <subcellularLocation>
        <location evidence="3">Cytoplasm</location>
    </subcellularLocation>
    <subcellularLocation>
        <location evidence="3">Nucleus</location>
    </subcellularLocation>
    <subcellularLocation>
        <location evidence="6">Peroxisome</location>
    </subcellularLocation>
</comment>
<comment type="miscellaneous">
    <text evidence="4">Present with 892 molecules/cell in log phase SD medium.</text>
</comment>
<comment type="similarity">
    <text evidence="8">Belongs to the cytidine and deoxycytidylate deaminase family. ADAT3 subfamily.</text>
</comment>
<comment type="caution">
    <text evidence="8">In contrast to other cytidine and deoxycytidylate deaminase, lacks to conserved Glu active site in position 218 which is replaced by a Val residue, suggesting that it acts as a regulatory subunit.</text>
</comment>
<comment type="sequence caution" evidence="8">
    <conflict type="erroneous initiation">
        <sequence resource="EMBL-CDS" id="AAB64529"/>
    </conflict>
    <text>Truncated N-terminus.</text>
</comment>
<reference key="1">
    <citation type="journal article" date="1999" name="Science">
        <title>An adenosine deaminase that generates inosine at the wobble position of transfer RNAs.</title>
        <authorList>
            <person name="Gerber A.P."/>
            <person name="Keller W."/>
        </authorList>
    </citation>
    <scope>NUCLEOTIDE SEQUENCE [GENOMIC DNA]</scope>
    <scope>FUNCTION</scope>
    <source>
        <strain>BMA41</strain>
    </source>
</reference>
<reference key="2">
    <citation type="journal article" date="1997" name="Nature">
        <title>The nucleotide sequence of Saccharomyces cerevisiae chromosome XII.</title>
        <authorList>
            <person name="Johnston M."/>
            <person name="Hillier L.W."/>
            <person name="Riles L."/>
            <person name="Albermann K."/>
            <person name="Andre B."/>
            <person name="Ansorge W."/>
            <person name="Benes V."/>
            <person name="Brueckner M."/>
            <person name="Delius H."/>
            <person name="Dubois E."/>
            <person name="Duesterhoeft A."/>
            <person name="Entian K.-D."/>
            <person name="Floeth M."/>
            <person name="Goffeau A."/>
            <person name="Hebling U."/>
            <person name="Heumann K."/>
            <person name="Heuss-Neitzel D."/>
            <person name="Hilbert H."/>
            <person name="Hilger F."/>
            <person name="Kleine K."/>
            <person name="Koetter P."/>
            <person name="Louis E.J."/>
            <person name="Messenguy F."/>
            <person name="Mewes H.-W."/>
            <person name="Miosga T."/>
            <person name="Moestl D."/>
            <person name="Mueller-Auer S."/>
            <person name="Nentwich U."/>
            <person name="Obermaier B."/>
            <person name="Piravandi E."/>
            <person name="Pohl T.M."/>
            <person name="Portetelle D."/>
            <person name="Purnelle B."/>
            <person name="Rechmann S."/>
            <person name="Rieger M."/>
            <person name="Rinke M."/>
            <person name="Rose M."/>
            <person name="Scharfe M."/>
            <person name="Scherens B."/>
            <person name="Scholler P."/>
            <person name="Schwager C."/>
            <person name="Schwarz S."/>
            <person name="Underwood A.P."/>
            <person name="Urrestarazu L.A."/>
            <person name="Vandenbol M."/>
            <person name="Verhasselt P."/>
            <person name="Vierendeels F."/>
            <person name="Voet M."/>
            <person name="Volckaert G."/>
            <person name="Voss H."/>
            <person name="Wambutt R."/>
            <person name="Wedler E."/>
            <person name="Wedler H."/>
            <person name="Zimmermann F.K."/>
            <person name="Zollner A."/>
            <person name="Hani J."/>
            <person name="Hoheisel J.D."/>
        </authorList>
    </citation>
    <scope>NUCLEOTIDE SEQUENCE [LARGE SCALE GENOMIC DNA]</scope>
    <source>
        <strain>ATCC 204508 / S288c</strain>
    </source>
</reference>
<reference key="3">
    <citation type="journal article" date="2014" name="G3 (Bethesda)">
        <title>The reference genome sequence of Saccharomyces cerevisiae: Then and now.</title>
        <authorList>
            <person name="Engel S.R."/>
            <person name="Dietrich F.S."/>
            <person name="Fisk D.G."/>
            <person name="Binkley G."/>
            <person name="Balakrishnan R."/>
            <person name="Costanzo M.C."/>
            <person name="Dwight S.S."/>
            <person name="Hitz B.C."/>
            <person name="Karra K."/>
            <person name="Nash R.S."/>
            <person name="Weng S."/>
            <person name="Wong E.D."/>
            <person name="Lloyd P."/>
            <person name="Skrzypek M.S."/>
            <person name="Miyasato S.R."/>
            <person name="Simison M."/>
            <person name="Cherry J.M."/>
        </authorList>
    </citation>
    <scope>GENOME REANNOTATION</scope>
    <source>
        <strain>ATCC 204508 / S288c</strain>
    </source>
</reference>
<reference key="4">
    <citation type="journal article" date="1996" name="J. Mol. Biol.">
        <title>Mechanism, specificity and general properties of the yeast enzyme catalysing the formation of inosine 34 in the anticodon of transfer RNA.</title>
        <authorList>
            <person name="Auxilien S."/>
            <person name="Crain P.F."/>
            <person name="Trewyn R.W."/>
            <person name="Grosjean H."/>
        </authorList>
    </citation>
    <scope>FUNCTION</scope>
</reference>
<reference key="5">
    <citation type="journal article" date="2003" name="Nature">
        <title>Global analysis of protein localization in budding yeast.</title>
        <authorList>
            <person name="Huh W.-K."/>
            <person name="Falvo J.V."/>
            <person name="Gerke L.C."/>
            <person name="Carroll A.S."/>
            <person name="Howson R.W."/>
            <person name="Weissman J.S."/>
            <person name="O'Shea E.K."/>
        </authorList>
    </citation>
    <scope>SUBCELLULAR LOCATION [LARGE SCALE ANALYSIS]</scope>
</reference>
<reference key="6">
    <citation type="journal article" date="2003" name="Nature">
        <title>Global analysis of protein expression in yeast.</title>
        <authorList>
            <person name="Ghaemmaghami S."/>
            <person name="Huh W.-K."/>
            <person name="Bower K."/>
            <person name="Howson R.W."/>
            <person name="Belle A."/>
            <person name="Dephoure N."/>
            <person name="O'Shea E.K."/>
            <person name="Weissman J.S."/>
        </authorList>
    </citation>
    <scope>LEVEL OF PROTEIN EXPRESSION [LARGE SCALE ANALYSIS]</scope>
</reference>
<reference key="7">
    <citation type="journal article" date="2022" name="Mol. Syst. Biol.">
        <title>Systematic multi-level analysis of an organelle proteome reveals new peroxisomal functions.</title>
        <authorList>
            <person name="Yifrach E."/>
            <person name="Holbrook-Smith D."/>
            <person name="Buergi J."/>
            <person name="Othman A."/>
            <person name="Eisenstein M."/>
            <person name="van Roermund C.W."/>
            <person name="Visser W."/>
            <person name="Tirosh A."/>
            <person name="Rudowitz M."/>
            <person name="Bibi C."/>
            <person name="Galor S."/>
            <person name="Weill U."/>
            <person name="Fadel A."/>
            <person name="Peleg Y."/>
            <person name="Erdmann R."/>
            <person name="Waterham H.R."/>
            <person name="Wanders R.J.A."/>
            <person name="Wilmanns M."/>
            <person name="Zamboni N."/>
            <person name="Schuldiner M."/>
            <person name="Zalckvar E."/>
        </authorList>
    </citation>
    <scope>SUBCELLULAR LOCATION</scope>
</reference>
<reference evidence="9" key="8">
    <citation type="journal article" date="2020" name="BMC Biol.">
        <title>Crystal structure of the yeast heterodimeric ADAT2/3 deaminase.</title>
        <authorList>
            <person name="Liu X."/>
            <person name="Chen R."/>
            <person name="Sun Y."/>
            <person name="Chen R."/>
            <person name="Zhou J."/>
            <person name="Tian Q."/>
            <person name="Tao X."/>
            <person name="Zhang Z."/>
            <person name="Luo G.Z."/>
            <person name="Xie W."/>
        </authorList>
    </citation>
    <scope>X-RAY CRYSTALLOGRAPHY (2.80 ANGSTROMS) IN COMPLEX WITH ZN(2+)</scope>
</reference>
<feature type="chain" id="PRO_0000171741" description="tRNA-specific adenosine deaminase subunit TAD3">
    <location>
        <begin position="1"/>
        <end position="322"/>
    </location>
</feature>
<feature type="domain" description="CMP/dCMP-type deaminase" evidence="1">
    <location>
        <begin position="162"/>
        <end position="283"/>
    </location>
</feature>
<feature type="binding site" evidence="5 9">
    <location>
        <position position="216"/>
    </location>
    <ligand>
        <name>Zn(2+)</name>
        <dbReference type="ChEBI" id="CHEBI:29105"/>
    </ligand>
</feature>
<feature type="binding site" evidence="5 9">
    <location>
        <position position="254"/>
    </location>
    <ligand>
        <name>Zn(2+)</name>
        <dbReference type="ChEBI" id="CHEBI:29105"/>
    </ligand>
</feature>
<feature type="binding site" evidence="5 9">
    <location>
        <position position="257"/>
    </location>
    <ligand>
        <name>Zn(2+)</name>
        <dbReference type="ChEBI" id="CHEBI:29105"/>
    </ligand>
</feature>
<feature type="binding site" evidence="5 9">
    <location>
        <position position="322"/>
    </location>
    <ligand>
        <name>Zn(2+)</name>
        <dbReference type="ChEBI" id="CHEBI:29105"/>
    </ligand>
</feature>
<feature type="turn" evidence="10">
    <location>
        <begin position="13"/>
        <end position="16"/>
    </location>
</feature>
<feature type="turn" evidence="10">
    <location>
        <begin position="19"/>
        <end position="21"/>
    </location>
</feature>
<feature type="strand" evidence="10">
    <location>
        <begin position="22"/>
        <end position="24"/>
    </location>
</feature>
<feature type="helix" evidence="10">
    <location>
        <begin position="29"/>
        <end position="32"/>
    </location>
</feature>
<feature type="helix" evidence="10">
    <location>
        <begin position="46"/>
        <end position="63"/>
    </location>
</feature>
<feature type="strand" evidence="10">
    <location>
        <begin position="78"/>
        <end position="83"/>
    </location>
</feature>
<feature type="turn" evidence="10">
    <location>
        <begin position="90"/>
        <end position="92"/>
    </location>
</feature>
<feature type="helix" evidence="10">
    <location>
        <begin position="96"/>
        <end position="101"/>
    </location>
</feature>
<feature type="helix" evidence="10">
    <location>
        <begin position="102"/>
        <end position="104"/>
    </location>
</feature>
<feature type="helix" evidence="10">
    <location>
        <begin position="129"/>
        <end position="138"/>
    </location>
</feature>
<feature type="helix" evidence="10">
    <location>
        <begin position="148"/>
        <end position="155"/>
    </location>
</feature>
<feature type="helix" evidence="10">
    <location>
        <begin position="160"/>
        <end position="179"/>
    </location>
</feature>
<feature type="strand" evidence="10">
    <location>
        <begin position="187"/>
        <end position="191"/>
    </location>
</feature>
<feature type="strand" evidence="10">
    <location>
        <begin position="200"/>
        <end position="203"/>
    </location>
</feature>
<feature type="helix" evidence="10">
    <location>
        <begin position="205"/>
        <end position="207"/>
    </location>
</feature>
<feature type="helix" evidence="10">
    <location>
        <begin position="217"/>
        <end position="231"/>
    </location>
</feature>
<feature type="turn" evidence="10">
    <location>
        <begin position="241"/>
        <end position="244"/>
    </location>
</feature>
<feature type="strand" evidence="10">
    <location>
        <begin position="246"/>
        <end position="251"/>
    </location>
</feature>
<feature type="helix" evidence="10">
    <location>
        <begin position="255"/>
        <end position="263"/>
    </location>
</feature>
<feature type="strand" evidence="10">
    <location>
        <begin position="267"/>
        <end position="273"/>
    </location>
</feature>
<feature type="turn" evidence="10">
    <location>
        <begin position="276"/>
        <end position="278"/>
    </location>
</feature>
<feature type="strand" evidence="10">
    <location>
        <begin position="280"/>
        <end position="282"/>
    </location>
</feature>
<feature type="helix" evidence="10">
    <location>
        <begin position="291"/>
        <end position="293"/>
    </location>
</feature>
<feature type="strand" evidence="10">
    <location>
        <begin position="302"/>
        <end position="306"/>
    </location>
</feature>
<feature type="strand" evidence="10">
    <location>
        <begin position="308"/>
        <end position="311"/>
    </location>
</feature>